<organism>
    <name type="scientific">Nocardioides sp. (strain ATCC BAA-499 / JS614)</name>
    <dbReference type="NCBI Taxonomy" id="196162"/>
    <lineage>
        <taxon>Bacteria</taxon>
        <taxon>Bacillati</taxon>
        <taxon>Actinomycetota</taxon>
        <taxon>Actinomycetes</taxon>
        <taxon>Propionibacteriales</taxon>
        <taxon>Nocardioidaceae</taxon>
        <taxon>Nocardioides</taxon>
    </lineage>
</organism>
<proteinExistence type="inferred from homology"/>
<name>Y2383_NOCSJ</name>
<comment type="subcellular location">
    <subcellularLocation>
        <location evidence="1">Cytoplasm</location>
    </subcellularLocation>
</comment>
<comment type="similarity">
    <text evidence="1">Belongs to the TACO1 family.</text>
</comment>
<dbReference type="EMBL" id="CP000509">
    <property type="protein sequence ID" value="ABL81888.1"/>
    <property type="molecule type" value="Genomic_DNA"/>
</dbReference>
<dbReference type="RefSeq" id="WP_011755829.1">
    <property type="nucleotide sequence ID" value="NC_008699.1"/>
</dbReference>
<dbReference type="SMR" id="A1SJA3"/>
<dbReference type="STRING" id="196162.Noca_2383"/>
<dbReference type="KEGG" id="nca:Noca_2383"/>
<dbReference type="eggNOG" id="COG0217">
    <property type="taxonomic scope" value="Bacteria"/>
</dbReference>
<dbReference type="HOGENOM" id="CLU_062974_2_2_11"/>
<dbReference type="OrthoDB" id="9781053at2"/>
<dbReference type="Proteomes" id="UP000000640">
    <property type="component" value="Chromosome"/>
</dbReference>
<dbReference type="GO" id="GO:0005829">
    <property type="term" value="C:cytosol"/>
    <property type="evidence" value="ECO:0007669"/>
    <property type="project" value="TreeGrafter"/>
</dbReference>
<dbReference type="GO" id="GO:0003677">
    <property type="term" value="F:DNA binding"/>
    <property type="evidence" value="ECO:0007669"/>
    <property type="project" value="UniProtKB-UniRule"/>
</dbReference>
<dbReference type="GO" id="GO:0006355">
    <property type="term" value="P:regulation of DNA-templated transcription"/>
    <property type="evidence" value="ECO:0007669"/>
    <property type="project" value="UniProtKB-UniRule"/>
</dbReference>
<dbReference type="FunFam" id="1.10.10.200:FF:000002">
    <property type="entry name" value="Probable transcriptional regulatory protein CLM62_37755"/>
    <property type="match status" value="1"/>
</dbReference>
<dbReference type="Gene3D" id="1.10.10.200">
    <property type="match status" value="1"/>
</dbReference>
<dbReference type="Gene3D" id="3.30.70.980">
    <property type="match status" value="2"/>
</dbReference>
<dbReference type="HAMAP" id="MF_00693">
    <property type="entry name" value="Transcrip_reg_TACO1"/>
    <property type="match status" value="1"/>
</dbReference>
<dbReference type="InterPro" id="IPR017856">
    <property type="entry name" value="Integrase-like_N"/>
</dbReference>
<dbReference type="InterPro" id="IPR048300">
    <property type="entry name" value="TACO1_YebC-like_2nd/3rd_dom"/>
</dbReference>
<dbReference type="InterPro" id="IPR049083">
    <property type="entry name" value="TACO1_YebC_N"/>
</dbReference>
<dbReference type="InterPro" id="IPR002876">
    <property type="entry name" value="Transcrip_reg_TACO1-like"/>
</dbReference>
<dbReference type="InterPro" id="IPR026564">
    <property type="entry name" value="Transcrip_reg_TACO1-like_dom3"/>
</dbReference>
<dbReference type="InterPro" id="IPR029072">
    <property type="entry name" value="YebC-like"/>
</dbReference>
<dbReference type="NCBIfam" id="NF001030">
    <property type="entry name" value="PRK00110.1"/>
    <property type="match status" value="1"/>
</dbReference>
<dbReference type="NCBIfam" id="NF009044">
    <property type="entry name" value="PRK12378.1"/>
    <property type="match status" value="1"/>
</dbReference>
<dbReference type="NCBIfam" id="TIGR01033">
    <property type="entry name" value="YebC/PmpR family DNA-binding transcriptional regulator"/>
    <property type="match status" value="1"/>
</dbReference>
<dbReference type="PANTHER" id="PTHR12532:SF6">
    <property type="entry name" value="TRANSCRIPTIONAL REGULATORY PROTEIN YEBC-RELATED"/>
    <property type="match status" value="1"/>
</dbReference>
<dbReference type="PANTHER" id="PTHR12532">
    <property type="entry name" value="TRANSLATIONAL ACTIVATOR OF CYTOCHROME C OXIDASE 1"/>
    <property type="match status" value="1"/>
</dbReference>
<dbReference type="Pfam" id="PF20772">
    <property type="entry name" value="TACO1_YebC_N"/>
    <property type="match status" value="1"/>
</dbReference>
<dbReference type="Pfam" id="PF01709">
    <property type="entry name" value="Transcrip_reg"/>
    <property type="match status" value="1"/>
</dbReference>
<dbReference type="SUPFAM" id="SSF75625">
    <property type="entry name" value="YebC-like"/>
    <property type="match status" value="1"/>
</dbReference>
<reference key="1">
    <citation type="submission" date="2006-12" db="EMBL/GenBank/DDBJ databases">
        <title>Complete sequence of chromosome 1 of Nocardioides sp. JS614.</title>
        <authorList>
            <person name="Copeland A."/>
            <person name="Lucas S."/>
            <person name="Lapidus A."/>
            <person name="Barry K."/>
            <person name="Detter J.C."/>
            <person name="Glavina del Rio T."/>
            <person name="Hammon N."/>
            <person name="Israni S."/>
            <person name="Dalin E."/>
            <person name="Tice H."/>
            <person name="Pitluck S."/>
            <person name="Thompson L.S."/>
            <person name="Brettin T."/>
            <person name="Bruce D."/>
            <person name="Han C."/>
            <person name="Tapia R."/>
            <person name="Schmutz J."/>
            <person name="Larimer F."/>
            <person name="Land M."/>
            <person name="Hauser L."/>
            <person name="Kyrpides N."/>
            <person name="Kim E."/>
            <person name="Mattes T."/>
            <person name="Gossett J."/>
            <person name="Richardson P."/>
        </authorList>
    </citation>
    <scope>NUCLEOTIDE SEQUENCE [LARGE SCALE GENOMIC DNA]</scope>
    <source>
        <strain>ATCC BAA-499 / JS614</strain>
    </source>
</reference>
<accession>A1SJA3</accession>
<feature type="chain" id="PRO_1000045348" description="Probable transcriptional regulatory protein Noca_2383">
    <location>
        <begin position="1"/>
        <end position="259"/>
    </location>
</feature>
<evidence type="ECO:0000255" key="1">
    <source>
        <dbReference type="HAMAP-Rule" id="MF_00693"/>
    </source>
</evidence>
<gene>
    <name type="ordered locus">Noca_2383</name>
</gene>
<sequence>MSGHSKWATTKHKKAAIDAKRGKLFAKLIKNIEIAAKMGGPDPAGNPTLYDAIQKAKKQSVPNKNIDSAVKRGGGLESGGVDYETIMYEAYGPQGVALLVECLTDNRNRAAMEVRTAVTRNGGTMADPGSVSRLFTRKGVVVVEKEQERGGKPWEISEDDILEATLDAGAEEVDDLGESFEIQSEASDVVAVRTALQAAGIDYDSAEVQFVATLDIPVAETDVAGKVFRLIDAVDDLDDVQNVFTNADIPDDVLDSIDA</sequence>
<keyword id="KW-0963">Cytoplasm</keyword>
<keyword id="KW-0238">DNA-binding</keyword>
<keyword id="KW-1185">Reference proteome</keyword>
<keyword id="KW-0804">Transcription</keyword>
<keyword id="KW-0805">Transcription regulation</keyword>
<protein>
    <recommendedName>
        <fullName evidence="1">Probable transcriptional regulatory protein Noca_2383</fullName>
    </recommendedName>
</protein>